<comment type="similarity">
    <text evidence="1">Belongs to the eukaryotic ribosomal protein eL43 family.</text>
</comment>
<comment type="caution">
    <text evidence="1">Could be the product of a pseudogene.</text>
</comment>
<keyword id="KW-0479">Metal-binding</keyword>
<keyword id="KW-1185">Reference proteome</keyword>
<keyword id="KW-0687">Ribonucleoprotein</keyword>
<keyword id="KW-0689">Ribosomal protein</keyword>
<keyword id="KW-0862">Zinc</keyword>
<keyword id="KW-0863">Zinc-finger</keyword>
<organism>
    <name type="scientific">Homo sapiens</name>
    <name type="common">Human</name>
    <dbReference type="NCBI Taxonomy" id="9606"/>
    <lineage>
        <taxon>Eukaryota</taxon>
        <taxon>Metazoa</taxon>
        <taxon>Chordata</taxon>
        <taxon>Craniata</taxon>
        <taxon>Vertebrata</taxon>
        <taxon>Euteleostomi</taxon>
        <taxon>Mammalia</taxon>
        <taxon>Eutheria</taxon>
        <taxon>Euarchontoglires</taxon>
        <taxon>Primates</taxon>
        <taxon>Haplorrhini</taxon>
        <taxon>Catarrhini</taxon>
        <taxon>Hominidae</taxon>
        <taxon>Homo</taxon>
    </lineage>
</organism>
<sequence>MAKCTKKVGGIVSKYRTHHGASLWKMVKEIEISQHTKYTCSFCGKTKMKRRAVKIRHCNSCMKTVAGSAWTYNTTSAVMVKSAIRRLKELKDQ</sequence>
<protein>
    <recommendedName>
        <fullName evidence="1">Putative ribosomal protein eL43-like</fullName>
    </recommendedName>
    <alternativeName>
        <fullName>Putative 60S ribosomal protein L37a-like protein</fullName>
    </alternativeName>
    <alternativeName>
        <fullName>Ribosomal protein L37a pseudogene 8</fullName>
    </alternativeName>
</protein>
<accession>A6NKH3</accession>
<name>RL37L_HUMAN</name>
<gene>
    <name type="primary">RPL37AP8</name>
    <name type="synonym">RPL37L</name>
</gene>
<feature type="chain" id="PRO_0000329281" description="Putative ribosomal protein eL43-like">
    <location>
        <begin position="1"/>
        <end position="93"/>
    </location>
</feature>
<feature type="zinc finger region" description="C4-type">
    <location>
        <begin position="40"/>
        <end position="61"/>
    </location>
</feature>
<evidence type="ECO:0000305" key="1"/>
<proteinExistence type="uncertain"/>
<reference key="1">
    <citation type="journal article" date="2006" name="Nature">
        <title>Human chromosome 11 DNA sequence and analysis including novel gene identification.</title>
        <authorList>
            <person name="Taylor T.D."/>
            <person name="Noguchi H."/>
            <person name="Totoki Y."/>
            <person name="Toyoda A."/>
            <person name="Kuroki Y."/>
            <person name="Dewar K."/>
            <person name="Lloyd C."/>
            <person name="Itoh T."/>
            <person name="Takeda T."/>
            <person name="Kim D.-W."/>
            <person name="She X."/>
            <person name="Barlow K.F."/>
            <person name="Bloom T."/>
            <person name="Bruford E."/>
            <person name="Chang J.L."/>
            <person name="Cuomo C.A."/>
            <person name="Eichler E."/>
            <person name="FitzGerald M.G."/>
            <person name="Jaffe D.B."/>
            <person name="LaButti K."/>
            <person name="Nicol R."/>
            <person name="Park H.-S."/>
            <person name="Seaman C."/>
            <person name="Sougnez C."/>
            <person name="Yang X."/>
            <person name="Zimmer A.R."/>
            <person name="Zody M.C."/>
            <person name="Birren B.W."/>
            <person name="Nusbaum C."/>
            <person name="Fujiyama A."/>
            <person name="Hattori M."/>
            <person name="Rogers J."/>
            <person name="Lander E.S."/>
            <person name="Sakaki Y."/>
        </authorList>
    </citation>
    <scope>NUCLEOTIDE SEQUENCE [LARGE SCALE GENOMIC DNA]</scope>
</reference>
<dbReference type="EMBL" id="AP001781">
    <property type="status" value="NOT_ANNOTATED_CDS"/>
    <property type="molecule type" value="Genomic_DNA"/>
</dbReference>
<dbReference type="SMR" id="A6NKH3"/>
<dbReference type="FunCoup" id="A6NKH3">
    <property type="interactions" value="244"/>
</dbReference>
<dbReference type="IntAct" id="A6NKH3">
    <property type="interactions" value="1"/>
</dbReference>
<dbReference type="iPTMnet" id="A6NKH3"/>
<dbReference type="PhosphoSitePlus" id="A6NKH3"/>
<dbReference type="BioMuta" id="HGNC:35645"/>
<dbReference type="jPOST" id="A6NKH3"/>
<dbReference type="MassIVE" id="A6NKH3"/>
<dbReference type="PeptideAtlas" id="A6NKH3"/>
<dbReference type="AGR" id="HGNC:35645"/>
<dbReference type="GeneCards" id="RPL37AP8"/>
<dbReference type="HGNC" id="HGNC:35645">
    <property type="gene designation" value="RPL37AP8"/>
</dbReference>
<dbReference type="neXtProt" id="NX_A6NKH3"/>
<dbReference type="InParanoid" id="A6NKH3"/>
<dbReference type="PAN-GO" id="A6NKH3">
    <property type="GO annotations" value="0 GO annotations based on evolutionary models"/>
</dbReference>
<dbReference type="PhylomeDB" id="A6NKH3"/>
<dbReference type="PathwayCommons" id="A6NKH3"/>
<dbReference type="SignaLink" id="A6NKH3"/>
<dbReference type="Pharos" id="A6NKH3">
    <property type="development level" value="Tdark"/>
</dbReference>
<dbReference type="Proteomes" id="UP000005640">
    <property type="component" value="Unplaced"/>
</dbReference>
<dbReference type="RNAct" id="A6NKH3">
    <property type="molecule type" value="protein"/>
</dbReference>
<dbReference type="GO" id="GO:0022625">
    <property type="term" value="C:cytosolic large ribosomal subunit"/>
    <property type="evidence" value="ECO:0000318"/>
    <property type="project" value="GO_Central"/>
</dbReference>
<dbReference type="GO" id="GO:0003735">
    <property type="term" value="F:structural constituent of ribosome"/>
    <property type="evidence" value="ECO:0007669"/>
    <property type="project" value="InterPro"/>
</dbReference>
<dbReference type="GO" id="GO:0008270">
    <property type="term" value="F:zinc ion binding"/>
    <property type="evidence" value="ECO:0007669"/>
    <property type="project" value="UniProtKB-KW"/>
</dbReference>
<dbReference type="GO" id="GO:0006412">
    <property type="term" value="P:translation"/>
    <property type="evidence" value="ECO:0007669"/>
    <property type="project" value="InterPro"/>
</dbReference>
<dbReference type="FunFam" id="2.20.25.30:FF:000002">
    <property type="entry name" value="60S ribosomal protein L37a"/>
    <property type="match status" value="1"/>
</dbReference>
<dbReference type="Gene3D" id="2.20.25.30">
    <property type="match status" value="1"/>
</dbReference>
<dbReference type="InterPro" id="IPR011331">
    <property type="entry name" value="Ribosomal_eL37/eL43"/>
</dbReference>
<dbReference type="InterPro" id="IPR002674">
    <property type="entry name" value="Ribosomal_eL43"/>
</dbReference>
<dbReference type="InterPro" id="IPR011332">
    <property type="entry name" value="Ribosomal_zn-bd"/>
</dbReference>
<dbReference type="PANTHER" id="PTHR48188">
    <property type="entry name" value="60S RIBOSOMAL PROTEIN L43"/>
    <property type="match status" value="1"/>
</dbReference>
<dbReference type="PANTHER" id="PTHR48188:SF5">
    <property type="entry name" value="RIBOSOMAL PROTEIN EL43-LIKE-RELATED"/>
    <property type="match status" value="1"/>
</dbReference>
<dbReference type="Pfam" id="PF01780">
    <property type="entry name" value="Ribosomal_L37ae"/>
    <property type="match status" value="1"/>
</dbReference>
<dbReference type="SUPFAM" id="SSF57829">
    <property type="entry name" value="Zn-binding ribosomal proteins"/>
    <property type="match status" value="1"/>
</dbReference>